<dbReference type="EMBL" id="CU329670">
    <property type="protein sequence ID" value="CAB57439.1"/>
    <property type="molecule type" value="Genomic_DNA"/>
</dbReference>
<dbReference type="PIR" id="T41716">
    <property type="entry name" value="T41716"/>
</dbReference>
<dbReference type="SMR" id="Q9UT48"/>
<dbReference type="BioGRID" id="279585">
    <property type="interactions" value="196"/>
</dbReference>
<dbReference type="FunCoup" id="Q9UT48">
    <property type="interactions" value="879"/>
</dbReference>
<dbReference type="STRING" id="284812.Q9UT48"/>
<dbReference type="iPTMnet" id="Q9UT48"/>
<dbReference type="PaxDb" id="4896-SPAC821.05.1"/>
<dbReference type="EnsemblFungi" id="SPAC821.05.1">
    <property type="protein sequence ID" value="SPAC821.05.1:pep"/>
    <property type="gene ID" value="SPAC821.05"/>
</dbReference>
<dbReference type="KEGG" id="spo:2543153"/>
<dbReference type="PomBase" id="SPAC821.05"/>
<dbReference type="VEuPathDB" id="FungiDB:SPAC821.05"/>
<dbReference type="eggNOG" id="KOG1560">
    <property type="taxonomic scope" value="Eukaryota"/>
</dbReference>
<dbReference type="HOGENOM" id="CLU_044094_1_0_1"/>
<dbReference type="InParanoid" id="Q9UT48"/>
<dbReference type="OMA" id="WYQSTYF"/>
<dbReference type="PhylomeDB" id="Q9UT48"/>
<dbReference type="Reactome" id="R-SPO-156827">
    <property type="pathway name" value="L13a-mediated translational silencing of Ceruloplasmin expression"/>
</dbReference>
<dbReference type="Reactome" id="R-SPO-72649">
    <property type="pathway name" value="Translation initiation complex formation"/>
</dbReference>
<dbReference type="Reactome" id="R-SPO-72689">
    <property type="pathway name" value="Formation of a pool of free 40S subunits"/>
</dbReference>
<dbReference type="Reactome" id="R-SPO-72695">
    <property type="pathway name" value="Formation of the ternary complex, and subsequently, the 43S complex"/>
</dbReference>
<dbReference type="Reactome" id="R-SPO-72702">
    <property type="pathway name" value="Ribosomal scanning and start codon recognition"/>
</dbReference>
<dbReference type="Reactome" id="R-SPO-72706">
    <property type="pathway name" value="GTP hydrolysis and joining of the 60S ribosomal subunit"/>
</dbReference>
<dbReference type="PRO" id="PR:Q9UT48"/>
<dbReference type="Proteomes" id="UP000002485">
    <property type="component" value="Chromosome I"/>
</dbReference>
<dbReference type="GO" id="GO:0008180">
    <property type="term" value="C:COP9 signalosome"/>
    <property type="evidence" value="ECO:0000250"/>
    <property type="project" value="PomBase"/>
</dbReference>
<dbReference type="GO" id="GO:0005829">
    <property type="term" value="C:cytosol"/>
    <property type="evidence" value="ECO:0007005"/>
    <property type="project" value="PomBase"/>
</dbReference>
<dbReference type="GO" id="GO:0016282">
    <property type="term" value="C:eukaryotic 43S preinitiation complex"/>
    <property type="evidence" value="ECO:0000314"/>
    <property type="project" value="PomBase"/>
</dbReference>
<dbReference type="GO" id="GO:0033290">
    <property type="term" value="C:eukaryotic 48S preinitiation complex"/>
    <property type="evidence" value="ECO:0007669"/>
    <property type="project" value="UniProtKB-UniRule"/>
</dbReference>
<dbReference type="GO" id="GO:0005852">
    <property type="term" value="C:eukaryotic translation initiation factor 3 complex"/>
    <property type="evidence" value="ECO:0000314"/>
    <property type="project" value="PomBase"/>
</dbReference>
<dbReference type="GO" id="GO:0101005">
    <property type="term" value="F:deubiquitinase activity"/>
    <property type="evidence" value="ECO:0000255"/>
    <property type="project" value="PomBase"/>
</dbReference>
<dbReference type="GO" id="GO:0008237">
    <property type="term" value="F:metallopeptidase activity"/>
    <property type="evidence" value="ECO:0000318"/>
    <property type="project" value="GO_Central"/>
</dbReference>
<dbReference type="GO" id="GO:0003743">
    <property type="term" value="F:translation initiation factor activity"/>
    <property type="evidence" value="ECO:0007669"/>
    <property type="project" value="UniProtKB-UniRule"/>
</dbReference>
<dbReference type="GO" id="GO:0001732">
    <property type="term" value="P:formation of cytoplasmic translation initiation complex"/>
    <property type="evidence" value="ECO:0007669"/>
    <property type="project" value="UniProtKB-UniRule"/>
</dbReference>
<dbReference type="GO" id="GO:0006413">
    <property type="term" value="P:translational initiation"/>
    <property type="evidence" value="ECO:0000318"/>
    <property type="project" value="GO_Central"/>
</dbReference>
<dbReference type="CDD" id="cd08065">
    <property type="entry name" value="MPN_eIF3h"/>
    <property type="match status" value="1"/>
</dbReference>
<dbReference type="Gene3D" id="3.40.140.10">
    <property type="entry name" value="Cytidine Deaminase, domain 2"/>
    <property type="match status" value="1"/>
</dbReference>
<dbReference type="HAMAP" id="MF_03007">
    <property type="entry name" value="eIF3h"/>
    <property type="match status" value="1"/>
</dbReference>
<dbReference type="InterPro" id="IPR027524">
    <property type="entry name" value="eIF3h"/>
</dbReference>
<dbReference type="InterPro" id="IPR045810">
    <property type="entry name" value="eIF3h_C"/>
</dbReference>
<dbReference type="InterPro" id="IPR000555">
    <property type="entry name" value="JAMM/MPN+_dom"/>
</dbReference>
<dbReference type="InterPro" id="IPR050242">
    <property type="entry name" value="JAMM_MPN+_peptidase_M67A"/>
</dbReference>
<dbReference type="InterPro" id="IPR037518">
    <property type="entry name" value="MPN"/>
</dbReference>
<dbReference type="PANTHER" id="PTHR10410">
    <property type="entry name" value="EUKARYOTIC TRANSLATION INITIATION FACTOR 3 -RELATED"/>
    <property type="match status" value="1"/>
</dbReference>
<dbReference type="Pfam" id="PF19445">
    <property type="entry name" value="eIF3h_C"/>
    <property type="match status" value="1"/>
</dbReference>
<dbReference type="Pfam" id="PF01398">
    <property type="entry name" value="JAB"/>
    <property type="match status" value="1"/>
</dbReference>
<dbReference type="PROSITE" id="PS50249">
    <property type="entry name" value="MPN"/>
    <property type="match status" value="1"/>
</dbReference>
<gene>
    <name type="primary">eif3h</name>
    <name type="ORF">SPAC821.05</name>
</gene>
<name>EIF3H_SCHPO</name>
<keyword id="KW-0963">Cytoplasm</keyword>
<keyword id="KW-0396">Initiation factor</keyword>
<keyword id="KW-0539">Nucleus</keyword>
<keyword id="KW-0648">Protein biosynthesis</keyword>
<keyword id="KW-1185">Reference proteome</keyword>
<proteinExistence type="evidence at protein level"/>
<feature type="chain" id="PRO_0000316244" description="Eukaryotic translation initiation factor 3 subunit H">
    <location>
        <begin position="1"/>
        <end position="357"/>
    </location>
</feature>
<feature type="domain" description="MPN" evidence="2">
    <location>
        <begin position="20"/>
        <end position="162"/>
    </location>
</feature>
<protein>
    <recommendedName>
        <fullName evidence="1">Eukaryotic translation initiation factor 3 subunit H</fullName>
        <shortName evidence="1">eIF3h</shortName>
    </recommendedName>
</protein>
<organism>
    <name type="scientific">Schizosaccharomyces pombe (strain 972 / ATCC 24843)</name>
    <name type="common">Fission yeast</name>
    <dbReference type="NCBI Taxonomy" id="284812"/>
    <lineage>
        <taxon>Eukaryota</taxon>
        <taxon>Fungi</taxon>
        <taxon>Dikarya</taxon>
        <taxon>Ascomycota</taxon>
        <taxon>Taphrinomycotina</taxon>
        <taxon>Schizosaccharomycetes</taxon>
        <taxon>Schizosaccharomycetales</taxon>
        <taxon>Schizosaccharomycetaceae</taxon>
        <taxon>Schizosaccharomyces</taxon>
    </lineage>
</organism>
<reference key="1">
    <citation type="journal article" date="2002" name="Nature">
        <title>The genome sequence of Schizosaccharomyces pombe.</title>
        <authorList>
            <person name="Wood V."/>
            <person name="Gwilliam R."/>
            <person name="Rajandream M.A."/>
            <person name="Lyne M.H."/>
            <person name="Lyne R."/>
            <person name="Stewart A."/>
            <person name="Sgouros J.G."/>
            <person name="Peat N."/>
            <person name="Hayles J."/>
            <person name="Baker S.G."/>
            <person name="Basham D."/>
            <person name="Bowman S."/>
            <person name="Brooks K."/>
            <person name="Brown D."/>
            <person name="Brown S."/>
            <person name="Chillingworth T."/>
            <person name="Churcher C.M."/>
            <person name="Collins M."/>
            <person name="Connor R."/>
            <person name="Cronin A."/>
            <person name="Davis P."/>
            <person name="Feltwell T."/>
            <person name="Fraser A."/>
            <person name="Gentles S."/>
            <person name="Goble A."/>
            <person name="Hamlin N."/>
            <person name="Harris D.E."/>
            <person name="Hidalgo J."/>
            <person name="Hodgson G."/>
            <person name="Holroyd S."/>
            <person name="Hornsby T."/>
            <person name="Howarth S."/>
            <person name="Huckle E.J."/>
            <person name="Hunt S."/>
            <person name="Jagels K."/>
            <person name="James K.D."/>
            <person name="Jones L."/>
            <person name="Jones M."/>
            <person name="Leather S."/>
            <person name="McDonald S."/>
            <person name="McLean J."/>
            <person name="Mooney P."/>
            <person name="Moule S."/>
            <person name="Mungall K.L."/>
            <person name="Murphy L.D."/>
            <person name="Niblett D."/>
            <person name="Odell C."/>
            <person name="Oliver K."/>
            <person name="O'Neil S."/>
            <person name="Pearson D."/>
            <person name="Quail M.A."/>
            <person name="Rabbinowitsch E."/>
            <person name="Rutherford K.M."/>
            <person name="Rutter S."/>
            <person name="Saunders D."/>
            <person name="Seeger K."/>
            <person name="Sharp S."/>
            <person name="Skelton J."/>
            <person name="Simmonds M.N."/>
            <person name="Squares R."/>
            <person name="Squares S."/>
            <person name="Stevens K."/>
            <person name="Taylor K."/>
            <person name="Taylor R.G."/>
            <person name="Tivey A."/>
            <person name="Walsh S.V."/>
            <person name="Warren T."/>
            <person name="Whitehead S."/>
            <person name="Woodward J.R."/>
            <person name="Volckaert G."/>
            <person name="Aert R."/>
            <person name="Robben J."/>
            <person name="Grymonprez B."/>
            <person name="Weltjens I."/>
            <person name="Vanstreels E."/>
            <person name="Rieger M."/>
            <person name="Schaefer M."/>
            <person name="Mueller-Auer S."/>
            <person name="Gabel C."/>
            <person name="Fuchs M."/>
            <person name="Duesterhoeft A."/>
            <person name="Fritzc C."/>
            <person name="Holzer E."/>
            <person name="Moestl D."/>
            <person name="Hilbert H."/>
            <person name="Borzym K."/>
            <person name="Langer I."/>
            <person name="Beck A."/>
            <person name="Lehrach H."/>
            <person name="Reinhardt R."/>
            <person name="Pohl T.M."/>
            <person name="Eger P."/>
            <person name="Zimmermann W."/>
            <person name="Wedler H."/>
            <person name="Wambutt R."/>
            <person name="Purnelle B."/>
            <person name="Goffeau A."/>
            <person name="Cadieu E."/>
            <person name="Dreano S."/>
            <person name="Gloux S."/>
            <person name="Lelaure V."/>
            <person name="Mottier S."/>
            <person name="Galibert F."/>
            <person name="Aves S.J."/>
            <person name="Xiang Z."/>
            <person name="Hunt C."/>
            <person name="Moore K."/>
            <person name="Hurst S.M."/>
            <person name="Lucas M."/>
            <person name="Rochet M."/>
            <person name="Gaillardin C."/>
            <person name="Tallada V.A."/>
            <person name="Garzon A."/>
            <person name="Thode G."/>
            <person name="Daga R.R."/>
            <person name="Cruzado L."/>
            <person name="Jimenez J."/>
            <person name="Sanchez M."/>
            <person name="del Rey F."/>
            <person name="Benito J."/>
            <person name="Dominguez A."/>
            <person name="Revuelta J.L."/>
            <person name="Moreno S."/>
            <person name="Armstrong J."/>
            <person name="Forsburg S.L."/>
            <person name="Cerutti L."/>
            <person name="Lowe T."/>
            <person name="McCombie W.R."/>
            <person name="Paulsen I."/>
            <person name="Potashkin J."/>
            <person name="Shpakovski G.V."/>
            <person name="Ussery D."/>
            <person name="Barrell B.G."/>
            <person name="Nurse P."/>
        </authorList>
    </citation>
    <scope>NUCLEOTIDE SEQUENCE [LARGE SCALE GENOMIC DNA]</scope>
    <source>
        <strain>972 / ATCC 24843</strain>
    </source>
</reference>
<reference key="2">
    <citation type="journal article" date="2005" name="BMC Biol.">
        <title>PCI proteins eIF3e and eIF3m define distinct translation initiation factor 3 complexes.</title>
        <authorList>
            <person name="Zhou C."/>
            <person name="Arslan F."/>
            <person name="Wee S."/>
            <person name="Krishnan S."/>
            <person name="Ivanov A.R."/>
            <person name="Oliva A."/>
            <person name="Leatherwood J."/>
            <person name="Wolf D.A."/>
        </authorList>
    </citation>
    <scope>IDENTIFICATION IN THE EIF-3 COMPLEX</scope>
    <scope>IDENTIFICATION BY MASS SPECTROMETRY</scope>
</reference>
<reference key="3">
    <citation type="journal article" date="2006" name="Nat. Biotechnol.">
        <title>ORFeome cloning and global analysis of protein localization in the fission yeast Schizosaccharomyces pombe.</title>
        <authorList>
            <person name="Matsuyama A."/>
            <person name="Arai R."/>
            <person name="Yashiroda Y."/>
            <person name="Shirai A."/>
            <person name="Kamata A."/>
            <person name="Sekido S."/>
            <person name="Kobayashi Y."/>
            <person name="Hashimoto A."/>
            <person name="Hamamoto M."/>
            <person name="Hiraoka Y."/>
            <person name="Horinouchi S."/>
            <person name="Yoshida M."/>
        </authorList>
    </citation>
    <scope>SUBCELLULAR LOCATION [LARGE SCALE ANALYSIS]</scope>
</reference>
<evidence type="ECO:0000255" key="1">
    <source>
        <dbReference type="HAMAP-Rule" id="MF_03007"/>
    </source>
</evidence>
<evidence type="ECO:0000255" key="2">
    <source>
        <dbReference type="PROSITE-ProRule" id="PRU01182"/>
    </source>
</evidence>
<evidence type="ECO:0000269" key="3">
    <source>
    </source>
</evidence>
<evidence type="ECO:0000269" key="4">
    <source>
    </source>
</evidence>
<comment type="function">
    <text evidence="1">Component of the eukaryotic translation initiation factor 3 (eIF-3) complex, which is involved in protein synthesis of a specialized repertoire of mRNAs and, together with other initiation factors, stimulates binding of mRNA and methionyl-tRNAi to the 40S ribosome. The eIF-3 complex specifically targets and initiates translation of a subset of mRNAs involved in cell proliferation.</text>
</comment>
<comment type="subunit">
    <text evidence="1 3">Component of the eukaryotic translation initiation factor 3 (eIF-3) complex. The eIF-3 complex appears to include tif32/eif3a, SPAC25G10.08/eif3b, tif33/eif3c, SPBC4C3.07/eif3f, tif35/eif3g and sum1/eif3i. This set of common subunits may also associate exclusively with either moe1/eif3d and int6/eif3e, or with SPAC821.05/eif3h and SPAC1751.03/eif3m. The eIF-3 complex may also include SPAC3A12.13c/eif3j.</text>
</comment>
<comment type="subcellular location">
    <subcellularLocation>
        <location evidence="1 4">Cytoplasm</location>
    </subcellularLocation>
    <subcellularLocation>
        <location evidence="4">Nucleus</location>
    </subcellularLocation>
</comment>
<comment type="similarity">
    <text evidence="1">Belongs to the eIF-3 subunit H family.</text>
</comment>
<accession>Q9UT48</accession>
<sequence>MSDTTSLNVPELESPPIERVELESLLVMNIIKHCRDSFPNMGTIGQLVGIDIDGVLQVSSSFESPSVLENEESAVNKSVSGKARQAHTEAMLNRLQYIGAVTGHVGWYLGAYVSSFLSSPFFVETQYAYQKANPNSIAFLYDLSQSSNGTLYMRAYQLTPEFMAAHEEKTWTASSLNSHNLTPSNVIRELPIVIHNSHLATCLLHSLSEPPTPASTLTAEAALEDCESNLPLTETFSNFEVSLGTRYRKNIELLLESTDEFHYEQGNLGFHQRQLAREQAKIQQWIAKRKAENANRAAENLQPLPLDDWKRIFKLPAEPRLLDSLLISSQIMKSTQIDEQSSAFLSKLAGVRNAYAS</sequence>